<accession>P69937</accession>
<accession>P30743</accession>
<accession>Q2M6F4</accession>
<gene>
    <name evidence="7" type="primary">gdx</name>
    <name evidence="8" type="synonym">sugE</name>
    <name type="ordered locus">b4148</name>
    <name type="ordered locus">JW5738</name>
</gene>
<feature type="chain" id="PRO_0000108095" description="Guanidinium exporter">
    <location>
        <begin position="1"/>
        <end position="105"/>
    </location>
</feature>
<feature type="transmembrane region" description="Helical" evidence="1">
    <location>
        <begin position="1"/>
        <end position="21"/>
    </location>
</feature>
<feature type="topological domain" description="Cytoplasmic" evidence="11">
    <location>
        <begin position="22"/>
        <end position="28"/>
    </location>
</feature>
<feature type="transmembrane region" description="Helical" evidence="1">
    <location>
        <begin position="29"/>
        <end position="49"/>
    </location>
</feature>
<feature type="topological domain" description="Periplasmic" evidence="11">
    <location>
        <begin position="50"/>
        <end position="57"/>
    </location>
</feature>
<feature type="transmembrane region" description="Helical" evidence="1">
    <location>
        <begin position="58"/>
        <end position="78"/>
    </location>
</feature>
<feature type="topological domain" description="Cytoplasmic" evidence="11">
    <location>
        <begin position="79"/>
        <end position="81"/>
    </location>
</feature>
<feature type="transmembrane region" description="Helical" evidence="1">
    <location>
        <begin position="82"/>
        <end position="102"/>
    </location>
</feature>
<feature type="topological domain" description="Periplasmic" evidence="4">
    <location>
        <begin position="103"/>
        <end position="105"/>
    </location>
</feature>
<sequence>MSWIILVIAGLLEVVWAVGLKYTHGFSRLTPSVITVTAMIVSMALLAWAMKSLPVGTAYAVWTGIGAVGAAITGIVLLGESANPMRLASLALIVLGIIGLKLSTH</sequence>
<protein>
    <recommendedName>
        <fullName evidence="7">Guanidinium exporter</fullName>
    </recommendedName>
    <alternativeName>
        <fullName evidence="9">Quaternary ammonium compound-resistance protein SugE</fullName>
    </alternativeName>
</protein>
<dbReference type="EMBL" id="X69949">
    <property type="protein sequence ID" value="CAA49570.1"/>
    <property type="status" value="ALT_INIT"/>
    <property type="molecule type" value="Genomic_DNA"/>
</dbReference>
<dbReference type="EMBL" id="X69949">
    <property type="protein sequence ID" value="CAA49571.1"/>
    <property type="molecule type" value="Genomic_DNA"/>
</dbReference>
<dbReference type="EMBL" id="U21726">
    <property type="protein sequence ID" value="AAC46453.1"/>
    <property type="molecule type" value="Genomic_DNA"/>
</dbReference>
<dbReference type="EMBL" id="U14003">
    <property type="protein sequence ID" value="AAA97047.1"/>
    <property type="status" value="ALT_INIT"/>
    <property type="molecule type" value="Genomic_DNA"/>
</dbReference>
<dbReference type="EMBL" id="U00096">
    <property type="protein sequence ID" value="AAC77108.2"/>
    <property type="molecule type" value="Genomic_DNA"/>
</dbReference>
<dbReference type="EMBL" id="AP009048">
    <property type="protein sequence ID" value="BAE78152.1"/>
    <property type="molecule type" value="Genomic_DNA"/>
</dbReference>
<dbReference type="PIR" id="S56376">
    <property type="entry name" value="S56376"/>
</dbReference>
<dbReference type="RefSeq" id="NP_418572.4">
    <property type="nucleotide sequence ID" value="NC_000913.3"/>
</dbReference>
<dbReference type="RefSeq" id="WP_000118482.1">
    <property type="nucleotide sequence ID" value="NZ_STEB01000014.1"/>
</dbReference>
<dbReference type="SMR" id="P69937"/>
<dbReference type="BioGRID" id="4262698">
    <property type="interactions" value="178"/>
</dbReference>
<dbReference type="FunCoup" id="P69937">
    <property type="interactions" value="208"/>
</dbReference>
<dbReference type="STRING" id="511145.b4148"/>
<dbReference type="TCDB" id="2.A.7.1.4">
    <property type="family name" value="the drug/metabolite transporter (dmt) superfamily"/>
</dbReference>
<dbReference type="PaxDb" id="511145-b4148"/>
<dbReference type="EnsemblBacteria" id="AAC77108">
    <property type="protein sequence ID" value="AAC77108"/>
    <property type="gene ID" value="b4148"/>
</dbReference>
<dbReference type="GeneID" id="93777674"/>
<dbReference type="GeneID" id="948671"/>
<dbReference type="KEGG" id="ecj:JW5738"/>
<dbReference type="KEGG" id="eco:b4148"/>
<dbReference type="KEGG" id="ecoc:C3026_22425"/>
<dbReference type="PATRIC" id="fig|1411691.4.peg.2550"/>
<dbReference type="EchoBASE" id="EB1573"/>
<dbReference type="eggNOG" id="COG2076">
    <property type="taxonomic scope" value="Bacteria"/>
</dbReference>
<dbReference type="HOGENOM" id="CLU_133067_1_2_6"/>
<dbReference type="InParanoid" id="P69937"/>
<dbReference type="OMA" id="CLWMAQK"/>
<dbReference type="OrthoDB" id="9808638at2"/>
<dbReference type="PhylomeDB" id="P69937"/>
<dbReference type="BioCyc" id="EcoCyc:SUGE-MONOMER"/>
<dbReference type="BioCyc" id="MetaCyc:SUGE-MONOMER"/>
<dbReference type="PRO" id="PR:P69937"/>
<dbReference type="Proteomes" id="UP000000625">
    <property type="component" value="Chromosome"/>
</dbReference>
<dbReference type="GO" id="GO:0005886">
    <property type="term" value="C:plasma membrane"/>
    <property type="evidence" value="ECO:0000314"/>
    <property type="project" value="EcoCyc"/>
</dbReference>
<dbReference type="GO" id="GO:0015297">
    <property type="term" value="F:antiporter activity"/>
    <property type="evidence" value="ECO:0000314"/>
    <property type="project" value="EcoCyc"/>
</dbReference>
<dbReference type="GO" id="GO:0022857">
    <property type="term" value="F:transmembrane transporter activity"/>
    <property type="evidence" value="ECO:0000318"/>
    <property type="project" value="GO_Central"/>
</dbReference>
<dbReference type="GO" id="GO:0006811">
    <property type="term" value="P:monoatomic ion transport"/>
    <property type="evidence" value="ECO:0007669"/>
    <property type="project" value="UniProtKB-KW"/>
</dbReference>
<dbReference type="GO" id="GO:0055085">
    <property type="term" value="P:transmembrane transport"/>
    <property type="evidence" value="ECO:0000318"/>
    <property type="project" value="GO_Central"/>
</dbReference>
<dbReference type="GO" id="GO:1990961">
    <property type="term" value="P:xenobiotic detoxification by transmembrane export across the plasma membrane"/>
    <property type="evidence" value="ECO:0000315"/>
    <property type="project" value="EcoCyc"/>
</dbReference>
<dbReference type="FunFam" id="1.10.3730.20:FF:000001">
    <property type="entry name" value="Quaternary ammonium compound resistance transporter SugE"/>
    <property type="match status" value="1"/>
</dbReference>
<dbReference type="Gene3D" id="1.10.3730.20">
    <property type="match status" value="1"/>
</dbReference>
<dbReference type="InterPro" id="IPR000390">
    <property type="entry name" value="Small_drug/metabolite_transptr"/>
</dbReference>
<dbReference type="InterPro" id="IPR045324">
    <property type="entry name" value="Small_multidrug_res"/>
</dbReference>
<dbReference type="NCBIfam" id="NF008512">
    <property type="entry name" value="PRK11431.1"/>
    <property type="match status" value="1"/>
</dbReference>
<dbReference type="PANTHER" id="PTHR30561:SF0">
    <property type="entry name" value="GUANIDINIUM EXPORTER"/>
    <property type="match status" value="1"/>
</dbReference>
<dbReference type="PANTHER" id="PTHR30561">
    <property type="entry name" value="SMR FAMILY PROTON-DEPENDENT DRUG EFFLUX TRANSPORTER SUGE"/>
    <property type="match status" value="1"/>
</dbReference>
<dbReference type="Pfam" id="PF00893">
    <property type="entry name" value="Multi_Drug_Res"/>
    <property type="match status" value="1"/>
</dbReference>
<dbReference type="SUPFAM" id="SSF103481">
    <property type="entry name" value="Multidrug resistance efflux transporter EmrE"/>
    <property type="match status" value="1"/>
</dbReference>
<reference key="1">
    <citation type="journal article" date="1993" name="EMBO J.">
        <title>A novel multicopy suppressor of a groEL mutation includes two nested open reading frames transcribed from different promoters.</title>
        <authorList>
            <person name="Greener T."/>
            <person name="Govezensky D."/>
            <person name="Zamir A."/>
        </authorList>
    </citation>
    <scope>NUCLEOTIDE SEQUENCE [GENOMIC DNA]</scope>
    <source>
        <strain>K12</strain>
    </source>
</reference>
<reference key="2">
    <citation type="journal article" date="1998" name="J. Mol. Biol.">
        <title>The entericidin locus of Escherichia coli and its implications for programmed bacterial cell death.</title>
        <authorList>
            <person name="Bishop R.E."/>
            <person name="Leskiw B.K."/>
            <person name="Hodges R.S."/>
            <person name="Kay C.M."/>
            <person name="Weiner J.H."/>
        </authorList>
    </citation>
    <scope>NUCLEOTIDE SEQUENCE [GENOMIC DNA]</scope>
    <source>
        <strain>K12 / CS520</strain>
    </source>
</reference>
<reference key="3">
    <citation type="journal article" date="1995" name="Nucleic Acids Res.">
        <title>Analysis of the Escherichia coli genome VI: DNA sequence of the region from 92.8 through 100 minutes.</title>
        <authorList>
            <person name="Burland V.D."/>
            <person name="Plunkett G. III"/>
            <person name="Sofia H.J."/>
            <person name="Daniels D.L."/>
            <person name="Blattner F.R."/>
        </authorList>
    </citation>
    <scope>NUCLEOTIDE SEQUENCE [LARGE SCALE GENOMIC DNA]</scope>
    <source>
        <strain>K12 / MG1655 / ATCC 47076</strain>
    </source>
</reference>
<reference key="4">
    <citation type="journal article" date="1997" name="Science">
        <title>The complete genome sequence of Escherichia coli K-12.</title>
        <authorList>
            <person name="Blattner F.R."/>
            <person name="Plunkett G. III"/>
            <person name="Bloch C.A."/>
            <person name="Perna N.T."/>
            <person name="Burland V."/>
            <person name="Riley M."/>
            <person name="Collado-Vides J."/>
            <person name="Glasner J.D."/>
            <person name="Rode C.K."/>
            <person name="Mayhew G.F."/>
            <person name="Gregor J."/>
            <person name="Davis N.W."/>
            <person name="Kirkpatrick H.A."/>
            <person name="Goeden M.A."/>
            <person name="Rose D.J."/>
            <person name="Mau B."/>
            <person name="Shao Y."/>
        </authorList>
    </citation>
    <scope>NUCLEOTIDE SEQUENCE [LARGE SCALE GENOMIC DNA]</scope>
    <source>
        <strain>K12 / MG1655 / ATCC 47076</strain>
    </source>
</reference>
<reference key="5">
    <citation type="journal article" date="2006" name="Mol. Syst. Biol.">
        <title>Highly accurate genome sequences of Escherichia coli K-12 strains MG1655 and W3110.</title>
        <authorList>
            <person name="Hayashi K."/>
            <person name="Morooka N."/>
            <person name="Yamamoto Y."/>
            <person name="Fujita K."/>
            <person name="Isono K."/>
            <person name="Choi S."/>
            <person name="Ohtsubo E."/>
            <person name="Baba T."/>
            <person name="Wanner B.L."/>
            <person name="Mori H."/>
            <person name="Horiuchi T."/>
        </authorList>
    </citation>
    <scope>NUCLEOTIDE SEQUENCE [LARGE SCALE GENOMIC DNA]</scope>
    <source>
        <strain>K12 / W3110 / ATCC 27325 / DSM 5911</strain>
    </source>
</reference>
<reference key="6">
    <citation type="journal article" date="2002" name="J. Bacteriol.">
        <title>Overexpression of the Escherichia coli sugE gene confers resistance to a narrow range of quaternary ammonium compounds.</title>
        <authorList>
            <person name="Chung Y.J."/>
            <person name="Saier M.H. Jr."/>
        </authorList>
    </citation>
    <scope>FUNCTION</scope>
    <scope>OVEREXPRESSION</scope>
    <source>
        <strain>K12 / MG1655 / ATCC 47076</strain>
    </source>
</reference>
<reference key="7">
    <citation type="journal article" date="2004" name="Eur. J. Biochem.">
        <title>High level cell-free expression and specific labeling of integral membrane proteins.</title>
        <authorList>
            <person name="Klammt C."/>
            <person name="Loehr F."/>
            <person name="Schaefer B."/>
            <person name="Haase W."/>
            <person name="Doetsch V."/>
            <person name="Rueterjans H."/>
            <person name="Glaubitz C."/>
            <person name="Bernhard F."/>
        </authorList>
    </citation>
    <scope>SUBCELLULAR LOCATION</scope>
</reference>
<reference key="8">
    <citation type="journal article" date="2005" name="Science">
        <title>Global topology analysis of the Escherichia coli inner membrane proteome.</title>
        <authorList>
            <person name="Daley D.O."/>
            <person name="Rapp M."/>
            <person name="Granseth E."/>
            <person name="Melen K."/>
            <person name="Drew D."/>
            <person name="von Heijne G."/>
        </authorList>
    </citation>
    <scope>TOPOLOGY [LARGE SCALE ANALYSIS]</scope>
    <scope>SUBCELLULAR LOCATION</scope>
    <source>
        <strain>K12 / MG1655 / ATCC 47076</strain>
    </source>
</reference>
<reference key="9">
    <citation type="journal article" date="2017" name="Biochemistry">
        <title>Biochemical validation of a second guanidine riboswitch class in bacteria.</title>
        <authorList>
            <person name="Sherlock M.E."/>
            <person name="Malkowski S.N."/>
            <person name="Breaker R.R."/>
        </authorList>
    </citation>
    <scope>INDUCTION</scope>
</reference>
<reference key="10">
    <citation type="journal article" date="2018" name="Proc. Natl. Acad. Sci. U.S.A.">
        <title>Guanidinium export is the primal function of SMR family transporters.</title>
        <authorList>
            <person name="Kermani A.A."/>
            <person name="Macdonald C.B."/>
            <person name="Gundepudi R."/>
            <person name="Stockbridge R.B."/>
        </authorList>
    </citation>
    <scope>FUNCTION</scope>
    <scope>SUBUNIT</scope>
</reference>
<name>GDX_ECOLI</name>
<comment type="function">
    <text evidence="2 6">Guanidinium ion exporter. Couples guanidinium export to the proton motive force, exchanging one guanidinium ion for two protons (PubMed:29507227). Overexpression leads to resistance to a subset of toxic quaternary ammonium compounds such as cetylpyridinium, cetyldimethylethyl ammonium and cetrimide cations (PubMed:11948170).</text>
</comment>
<comment type="subunit">
    <text evidence="6">Homodimer. The subunits assemble with antiparallel topology.</text>
</comment>
<comment type="subcellular location">
    <subcellularLocation>
        <location evidence="3 4">Cell inner membrane</location>
        <topology evidence="3">Multi-pass membrane protein</topology>
    </subcellularLocation>
</comment>
<comment type="induction">
    <text evidence="5">Transcriptionally regulated by guanidine, via a guanidine-sensing riboswitch.</text>
</comment>
<comment type="similarity">
    <text evidence="9">Belongs to the drug/metabolite transporter (DMT) superfamily. Small multidrug resistance (SMR) (TC 2.A.7.1) family. Gdx/SugE subfamily.</text>
</comment>
<comment type="caution">
    <text evidence="10 12">Was originally (PubMed:8096175) thought to suppress a groEL mutation and mimic the effect of groE overexpression. This was later shown (PubMed:11948170) to be probably due to an artifact.</text>
</comment>
<comment type="sequence caution" evidence="9">
    <conflict type="erroneous initiation">
        <sequence resource="EMBL-CDS" id="AAA97047"/>
    </conflict>
    <text>Extended N-terminus.</text>
</comment>
<comment type="sequence caution" evidence="9">
    <conflict type="erroneous initiation">
        <sequence resource="EMBL-CDS" id="CAA49570"/>
    </conflict>
    <text>Extended N-terminus.</text>
</comment>
<proteinExistence type="evidence at protein level"/>
<keyword id="KW-0997">Cell inner membrane</keyword>
<keyword id="KW-1003">Cell membrane</keyword>
<keyword id="KW-0406">Ion transport</keyword>
<keyword id="KW-0472">Membrane</keyword>
<keyword id="KW-1185">Reference proteome</keyword>
<keyword id="KW-0812">Transmembrane</keyword>
<keyword id="KW-1133">Transmembrane helix</keyword>
<keyword id="KW-0813">Transport</keyword>
<organism>
    <name type="scientific">Escherichia coli (strain K12)</name>
    <dbReference type="NCBI Taxonomy" id="83333"/>
    <lineage>
        <taxon>Bacteria</taxon>
        <taxon>Pseudomonadati</taxon>
        <taxon>Pseudomonadota</taxon>
        <taxon>Gammaproteobacteria</taxon>
        <taxon>Enterobacterales</taxon>
        <taxon>Enterobacteriaceae</taxon>
        <taxon>Escherichia</taxon>
    </lineage>
</organism>
<evidence type="ECO:0000255" key="1"/>
<evidence type="ECO:0000269" key="2">
    <source>
    </source>
</evidence>
<evidence type="ECO:0000269" key="3">
    <source>
    </source>
</evidence>
<evidence type="ECO:0000269" key="4">
    <source>
    </source>
</evidence>
<evidence type="ECO:0000269" key="5">
    <source>
    </source>
</evidence>
<evidence type="ECO:0000269" key="6">
    <source>
    </source>
</evidence>
<evidence type="ECO:0000303" key="7">
    <source>
    </source>
</evidence>
<evidence type="ECO:0000303" key="8">
    <source>
    </source>
</evidence>
<evidence type="ECO:0000305" key="9"/>
<evidence type="ECO:0000305" key="10">
    <source>
    </source>
</evidence>
<evidence type="ECO:0000305" key="11">
    <source>
    </source>
</evidence>
<evidence type="ECO:0000305" key="12">
    <source>
    </source>
</evidence>